<comment type="function">
    <text evidence="1">Catalyzes the synthesis of 5,6-dihydrouridine (D), a modified base found in the D-loop of most tRNAs, via the reduction of the C5-C6 double bond in target uridines.</text>
</comment>
<comment type="catalytic activity">
    <reaction evidence="1">
        <text>a 5,6-dihydrouridine in tRNA + NAD(+) = a uridine in tRNA + NADH + H(+)</text>
        <dbReference type="Rhea" id="RHEA:54452"/>
        <dbReference type="Rhea" id="RHEA-COMP:13339"/>
        <dbReference type="Rhea" id="RHEA-COMP:13887"/>
        <dbReference type="ChEBI" id="CHEBI:15378"/>
        <dbReference type="ChEBI" id="CHEBI:57540"/>
        <dbReference type="ChEBI" id="CHEBI:57945"/>
        <dbReference type="ChEBI" id="CHEBI:65315"/>
        <dbReference type="ChEBI" id="CHEBI:74443"/>
    </reaction>
</comment>
<comment type="catalytic activity">
    <reaction evidence="1">
        <text>a 5,6-dihydrouridine in tRNA + NADP(+) = a uridine in tRNA + NADPH + H(+)</text>
        <dbReference type="Rhea" id="RHEA:23624"/>
        <dbReference type="Rhea" id="RHEA-COMP:13339"/>
        <dbReference type="Rhea" id="RHEA-COMP:13887"/>
        <dbReference type="ChEBI" id="CHEBI:15378"/>
        <dbReference type="ChEBI" id="CHEBI:57783"/>
        <dbReference type="ChEBI" id="CHEBI:58349"/>
        <dbReference type="ChEBI" id="CHEBI:65315"/>
        <dbReference type="ChEBI" id="CHEBI:74443"/>
    </reaction>
</comment>
<comment type="cofactor">
    <cofactor evidence="1">
        <name>FMN</name>
        <dbReference type="ChEBI" id="CHEBI:58210"/>
    </cofactor>
</comment>
<comment type="similarity">
    <text evidence="3">Belongs to the Dus family.</text>
</comment>
<dbReference type="EC" id="1.3.1.-"/>
<dbReference type="EMBL" id="Z37984">
    <property type="protein sequence ID" value="CAA86063.1"/>
    <property type="molecule type" value="Genomic_DNA"/>
</dbReference>
<dbReference type="PIR" id="I39492">
    <property type="entry name" value="I39492"/>
</dbReference>
<dbReference type="RefSeq" id="WP_035675952.1">
    <property type="nucleotide sequence ID" value="NZ_CP012915.1"/>
</dbReference>
<dbReference type="SMR" id="P45672"/>
<dbReference type="GeneID" id="56453395"/>
<dbReference type="GO" id="GO:0050660">
    <property type="term" value="F:flavin adenine dinucleotide binding"/>
    <property type="evidence" value="ECO:0007669"/>
    <property type="project" value="InterPro"/>
</dbReference>
<dbReference type="GO" id="GO:0000049">
    <property type="term" value="F:tRNA binding"/>
    <property type="evidence" value="ECO:0007669"/>
    <property type="project" value="UniProtKB-KW"/>
</dbReference>
<dbReference type="GO" id="GO:0017150">
    <property type="term" value="F:tRNA dihydrouridine synthase activity"/>
    <property type="evidence" value="ECO:0007669"/>
    <property type="project" value="InterPro"/>
</dbReference>
<dbReference type="CDD" id="cd02801">
    <property type="entry name" value="DUS_like_FMN"/>
    <property type="match status" value="1"/>
</dbReference>
<dbReference type="Gene3D" id="3.20.20.70">
    <property type="entry name" value="Aldolase class I"/>
    <property type="match status" value="1"/>
</dbReference>
<dbReference type="Gene3D" id="1.10.1200.80">
    <property type="entry name" value="Putative flavin oxidoreducatase, domain 2"/>
    <property type="match status" value="1"/>
</dbReference>
<dbReference type="InterPro" id="IPR013785">
    <property type="entry name" value="Aldolase_TIM"/>
</dbReference>
<dbReference type="InterPro" id="IPR035587">
    <property type="entry name" value="DUS-like_FMN-bd"/>
</dbReference>
<dbReference type="InterPro" id="IPR001269">
    <property type="entry name" value="DUS_fam"/>
</dbReference>
<dbReference type="InterPro" id="IPR004652">
    <property type="entry name" value="DusB-like"/>
</dbReference>
<dbReference type="InterPro" id="IPR024036">
    <property type="entry name" value="tRNA-dHydroUridine_Synthase_C"/>
</dbReference>
<dbReference type="InterPro" id="IPR018517">
    <property type="entry name" value="tRNA_hU_synthase_CS"/>
</dbReference>
<dbReference type="NCBIfam" id="TIGR00737">
    <property type="entry name" value="nifR3_yhdG"/>
    <property type="match status" value="1"/>
</dbReference>
<dbReference type="PANTHER" id="PTHR45846">
    <property type="entry name" value="TRNA-DIHYDROURIDINE(47) SYNTHASE [NAD(P)(+)]-LIKE"/>
    <property type="match status" value="1"/>
</dbReference>
<dbReference type="PANTHER" id="PTHR45846:SF1">
    <property type="entry name" value="TRNA-DIHYDROURIDINE(47) SYNTHASE [NAD(P)(+)]-LIKE"/>
    <property type="match status" value="1"/>
</dbReference>
<dbReference type="Pfam" id="PF01207">
    <property type="entry name" value="Dus"/>
    <property type="match status" value="1"/>
</dbReference>
<dbReference type="PIRSF" id="PIRSF006621">
    <property type="entry name" value="Dus"/>
    <property type="match status" value="1"/>
</dbReference>
<dbReference type="SUPFAM" id="SSF51395">
    <property type="entry name" value="FMN-linked oxidoreductases"/>
    <property type="match status" value="1"/>
</dbReference>
<dbReference type="PROSITE" id="PS01136">
    <property type="entry name" value="UPF0034"/>
    <property type="match status" value="1"/>
</dbReference>
<keyword id="KW-0285">Flavoprotein</keyword>
<keyword id="KW-0288">FMN</keyword>
<keyword id="KW-0521">NADP</keyword>
<keyword id="KW-0560">Oxidoreductase</keyword>
<keyword id="KW-0694">RNA-binding</keyword>
<keyword id="KW-0819">tRNA processing</keyword>
<keyword id="KW-0820">tRNA-binding</keyword>
<feature type="chain" id="PRO_0000162131" description="Probable tRNA-dihydrouridine synthase">
    <location>
        <begin position="1"/>
        <end position="328"/>
    </location>
</feature>
<feature type="active site" description="Proton donor" evidence="2">
    <location>
        <position position="102"/>
    </location>
</feature>
<feature type="binding site" evidence="1">
    <location>
        <begin position="18"/>
        <end position="20"/>
    </location>
    <ligand>
        <name>FMN</name>
        <dbReference type="ChEBI" id="CHEBI:58210"/>
    </ligand>
</feature>
<feature type="binding site" evidence="1">
    <location>
        <position position="72"/>
    </location>
    <ligand>
        <name>FMN</name>
        <dbReference type="ChEBI" id="CHEBI:58210"/>
    </ligand>
</feature>
<feature type="binding site" evidence="1">
    <location>
        <position position="141"/>
    </location>
    <ligand>
        <name>FMN</name>
        <dbReference type="ChEBI" id="CHEBI:58210"/>
    </ligand>
</feature>
<feature type="binding site" evidence="1">
    <location>
        <begin position="202"/>
        <end position="204"/>
    </location>
    <ligand>
        <name>FMN</name>
        <dbReference type="ChEBI" id="CHEBI:58210"/>
    </ligand>
</feature>
<feature type="binding site" evidence="1">
    <location>
        <begin position="226"/>
        <end position="227"/>
    </location>
    <ligand>
        <name>FMN</name>
        <dbReference type="ChEBI" id="CHEBI:58210"/>
    </ligand>
</feature>
<reference key="1">
    <citation type="journal article" date="1995" name="Can. J. Microbiol.">
        <title>The ntrBC genes of Azospirillum brasilense are part of a nifR3-like-ntrB-ntrC operon and are negatively regulated.</title>
        <authorList>
            <person name="Machado H.B."/>
            <person name="Yates M.G."/>
            <person name="Funayama S."/>
            <person name="Rigo L.U."/>
            <person name="Steffens M.B.R."/>
            <person name="Souza E.M."/>
            <person name="Pedrosa F.O."/>
        </authorList>
    </citation>
    <scope>NUCLEOTIDE SEQUENCE [GENOMIC DNA]</scope>
    <source>
        <strain>ATCC 29145 / DSM 1690 / IMET 11303 / Sp7</strain>
    </source>
</reference>
<protein>
    <recommendedName>
        <fullName>Probable tRNA-dihydrouridine synthase</fullName>
        <ecNumber>1.3.1.-</ecNumber>
    </recommendedName>
</protein>
<evidence type="ECO:0000250" key="1">
    <source>
        <dbReference type="UniProtKB" id="P33371"/>
    </source>
</evidence>
<evidence type="ECO:0000250" key="2">
    <source>
        <dbReference type="UniProtKB" id="Q5SMC7"/>
    </source>
</evidence>
<evidence type="ECO:0000305" key="3"/>
<sequence>MAIQIGTISLEGPVILAPMSGVTDLPFRRLVKQSGCGLVVSEMVASQAMIRENRQTLRMVECEPEQFPMAVQLAGCEPDVMAEAAKLNEDRGAAIIDINFGCPVKKVVNGHAGSSLMRDEALAARILEATAKAVTIPVTLKMRKGWDDSSLNAPRLARIAEECGIKLVTVHGRTREQFYNGTADWSFIRSVKEAVSIPVVVNGDITSFDAVDRALAESGADGVMIGRGAYGRPWFPAQVMHYIRTGERLPDPPLHEQLDTLLEHYDAMLTHYGVEGGLRVARKHISWYSTGLRDSAEFRSEVNRMSDPERVRGFIRDFYAPAIERMAA</sequence>
<name>DUS_AZOBR</name>
<proteinExistence type="inferred from homology"/>
<gene>
    <name type="primary">dus</name>
</gene>
<accession>P45672</accession>
<organism>
    <name type="scientific">Azospirillum brasilense</name>
    <dbReference type="NCBI Taxonomy" id="192"/>
    <lineage>
        <taxon>Bacteria</taxon>
        <taxon>Pseudomonadati</taxon>
        <taxon>Pseudomonadota</taxon>
        <taxon>Alphaproteobacteria</taxon>
        <taxon>Rhodospirillales</taxon>
        <taxon>Azospirillaceae</taxon>
        <taxon>Azospirillum</taxon>
    </lineage>
</organism>